<evidence type="ECO:0000255" key="1">
    <source>
        <dbReference type="PROSITE-ProRule" id="PRU00326"/>
    </source>
</evidence>
<evidence type="ECO:0000256" key="2">
    <source>
        <dbReference type="SAM" id="MobiDB-lite"/>
    </source>
</evidence>
<protein>
    <recommendedName>
        <fullName>Putative B3 domain-containing protein Os11g0242900</fullName>
    </recommendedName>
</protein>
<dbReference type="EMBL" id="AC135460">
    <property type="protein sequence ID" value="AAX95981.1"/>
    <property type="molecule type" value="Genomic_DNA"/>
</dbReference>
<dbReference type="EMBL" id="DP000010">
    <property type="protein sequence ID" value="ABA92341.1"/>
    <property type="molecule type" value="Genomic_DNA"/>
</dbReference>
<dbReference type="EMBL" id="AP014967">
    <property type="protein sequence ID" value="BAT13393.1"/>
    <property type="molecule type" value="Genomic_DNA"/>
</dbReference>
<dbReference type="PaxDb" id="39947-Q53N90"/>
<dbReference type="EnsemblPlants" id="Os11t0242900-00">
    <property type="protein sequence ID" value="Os11t0242900-00"/>
    <property type="gene ID" value="Os11g0242900"/>
</dbReference>
<dbReference type="Gramene" id="Os11t0242900-00">
    <property type="protein sequence ID" value="Os11t0242900-00"/>
    <property type="gene ID" value="Os11g0242900"/>
</dbReference>
<dbReference type="HOGENOM" id="CLU_075934_0_0_1"/>
<dbReference type="InParanoid" id="Q53N90"/>
<dbReference type="OMA" id="WTTHIQA"/>
<dbReference type="Proteomes" id="UP000000763">
    <property type="component" value="Chromosome 11"/>
</dbReference>
<dbReference type="Proteomes" id="UP000059680">
    <property type="component" value="Chromosome 11"/>
</dbReference>
<dbReference type="GO" id="GO:0005634">
    <property type="term" value="C:nucleus"/>
    <property type="evidence" value="ECO:0007669"/>
    <property type="project" value="UniProtKB-SubCell"/>
</dbReference>
<dbReference type="GO" id="GO:0003677">
    <property type="term" value="F:DNA binding"/>
    <property type="evidence" value="ECO:0007669"/>
    <property type="project" value="UniProtKB-KW"/>
</dbReference>
<dbReference type="Gene3D" id="2.40.330.10">
    <property type="entry name" value="DNA-binding pseudobarrel domain"/>
    <property type="match status" value="2"/>
</dbReference>
<dbReference type="InterPro" id="IPR003340">
    <property type="entry name" value="B3_DNA-bd"/>
</dbReference>
<dbReference type="InterPro" id="IPR015300">
    <property type="entry name" value="DNA-bd_pseudobarrel_sf"/>
</dbReference>
<dbReference type="InterPro" id="IPR050655">
    <property type="entry name" value="Plant_B3_domain"/>
</dbReference>
<dbReference type="PANTHER" id="PTHR31920">
    <property type="entry name" value="B3 DOMAIN-CONTAINING"/>
    <property type="match status" value="1"/>
</dbReference>
<dbReference type="PANTHER" id="PTHR31920:SF122">
    <property type="entry name" value="B3 DOMAIN-CONTAINING PROTEIN REM23"/>
    <property type="match status" value="1"/>
</dbReference>
<dbReference type="SUPFAM" id="SSF101936">
    <property type="entry name" value="DNA-binding pseudobarrel domain"/>
    <property type="match status" value="2"/>
</dbReference>
<dbReference type="PROSITE" id="PS50863">
    <property type="entry name" value="B3"/>
    <property type="match status" value="2"/>
</dbReference>
<feature type="chain" id="PRO_0000376987" description="Putative B3 domain-containing protein Os11g0242900">
    <location>
        <begin position="1"/>
        <end position="232"/>
    </location>
</feature>
<feature type="DNA-binding region" description="TF-B3 1" evidence="1">
    <location>
        <begin position="1"/>
        <end position="51"/>
    </location>
</feature>
<feature type="DNA-binding region" description="TF-B3 2" evidence="1">
    <location>
        <begin position="140"/>
        <end position="232"/>
    </location>
</feature>
<feature type="region of interest" description="Disordered" evidence="2">
    <location>
        <begin position="92"/>
        <end position="121"/>
    </location>
</feature>
<feature type="compositionally biased region" description="Basic and acidic residues" evidence="2">
    <location>
        <begin position="95"/>
        <end position="107"/>
    </location>
</feature>
<feature type="compositionally biased region" description="Polar residues" evidence="2">
    <location>
        <begin position="108"/>
        <end position="121"/>
    </location>
</feature>
<keyword id="KW-0238">DNA-binding</keyword>
<keyword id="KW-0539">Nucleus</keyword>
<keyword id="KW-1185">Reference proteome</keyword>
<keyword id="KW-0677">Repeat</keyword>
<keyword id="KW-0804">Transcription</keyword>
<keyword id="KW-0805">Transcription regulation</keyword>
<proteinExistence type="inferred from homology"/>
<organism>
    <name type="scientific">Oryza sativa subsp. japonica</name>
    <name type="common">Rice</name>
    <dbReference type="NCBI Taxonomy" id="39947"/>
    <lineage>
        <taxon>Eukaryota</taxon>
        <taxon>Viridiplantae</taxon>
        <taxon>Streptophyta</taxon>
        <taxon>Embryophyta</taxon>
        <taxon>Tracheophyta</taxon>
        <taxon>Spermatophyta</taxon>
        <taxon>Magnoliopsida</taxon>
        <taxon>Liliopsida</taxon>
        <taxon>Poales</taxon>
        <taxon>Poaceae</taxon>
        <taxon>BOP clade</taxon>
        <taxon>Oryzoideae</taxon>
        <taxon>Oryzeae</taxon>
        <taxon>Oryzinae</taxon>
        <taxon>Oryza</taxon>
        <taxon>Oryza sativa</taxon>
    </lineage>
</organism>
<name>Y1129_ORYSJ</name>
<sequence length="232" mass="26012">MTVELEKIAGSFFISKGWKTFVHRTGLLSGQYIRFQVLTPSKINVLLFDKKKDSKLPMIPSSKKQIKTAPKRSTGITINDMPTSKHASMLISHTSNKETSSDSRTESMTDIPSSSDNSGETTRSFDDLCFCARNTAVTPDIKNYISIIGQFLQRSSKFYIVTMNNTFMKQDRLVEAAGSDSVTMLLHKSSDDRCNLKRGWATFAATNAIHLHSVCIFHFYKPPNVKITIDVL</sequence>
<gene>
    <name type="ordered locus">Os11g0242900</name>
    <name type="ordered locus">LOC_Os11g13900</name>
</gene>
<accession>Q53N90</accession>
<accession>A0A0P0Y0Q5</accession>
<comment type="subcellular location">
    <subcellularLocation>
        <location evidence="1">Nucleus</location>
    </subcellularLocation>
</comment>
<reference key="1">
    <citation type="journal article" date="2005" name="BMC Biol.">
        <title>The sequence of rice chromosomes 11 and 12, rich in disease resistance genes and recent gene duplications.</title>
        <authorList>
            <consortium name="The rice chromosomes 11 and 12 sequencing consortia"/>
        </authorList>
    </citation>
    <scope>NUCLEOTIDE SEQUENCE [LARGE SCALE GENOMIC DNA]</scope>
    <source>
        <strain>cv. Nipponbare</strain>
    </source>
</reference>
<reference key="2">
    <citation type="journal article" date="2005" name="Nature">
        <title>The map-based sequence of the rice genome.</title>
        <authorList>
            <consortium name="International rice genome sequencing project (IRGSP)"/>
        </authorList>
    </citation>
    <scope>NUCLEOTIDE SEQUENCE [LARGE SCALE GENOMIC DNA]</scope>
    <source>
        <strain>cv. Nipponbare</strain>
    </source>
</reference>
<reference key="3">
    <citation type="journal article" date="2013" name="Rice">
        <title>Improvement of the Oryza sativa Nipponbare reference genome using next generation sequence and optical map data.</title>
        <authorList>
            <person name="Kawahara Y."/>
            <person name="de la Bastide M."/>
            <person name="Hamilton J.P."/>
            <person name="Kanamori H."/>
            <person name="McCombie W.R."/>
            <person name="Ouyang S."/>
            <person name="Schwartz D.C."/>
            <person name="Tanaka T."/>
            <person name="Wu J."/>
            <person name="Zhou S."/>
            <person name="Childs K.L."/>
            <person name="Davidson R.M."/>
            <person name="Lin H."/>
            <person name="Quesada-Ocampo L."/>
            <person name="Vaillancourt B."/>
            <person name="Sakai H."/>
            <person name="Lee S.S."/>
            <person name="Kim J."/>
            <person name="Numa H."/>
            <person name="Itoh T."/>
            <person name="Buell C.R."/>
            <person name="Matsumoto T."/>
        </authorList>
    </citation>
    <scope>GENOME REANNOTATION</scope>
    <source>
        <strain>cv. Nipponbare</strain>
    </source>
</reference>